<accession>A0A0J9U3L6</accession>
<accession>A0A0D2X810</accession>
<accession>A0A0J9U609</accession>
<protein>
    <recommendedName>
        <fullName evidence="7">Velvet complex subunit B</fullName>
    </recommendedName>
</protein>
<keyword id="KW-0963">Cytoplasm</keyword>
<keyword id="KW-0539">Nucleus</keyword>
<keyword id="KW-1185">Reference proteome</keyword>
<keyword id="KW-0749">Sporulation</keyword>
<keyword id="KW-0804">Transcription</keyword>
<keyword id="KW-0805">Transcription regulation</keyword>
<keyword id="KW-0843">Virulence</keyword>
<dbReference type="EMBL" id="DS231696">
    <property type="protein sequence ID" value="KNA93509.1"/>
    <property type="molecule type" value="Genomic_DNA"/>
</dbReference>
<dbReference type="EMBL" id="DS231696">
    <property type="protein sequence ID" value="KNA93510.1"/>
    <property type="molecule type" value="Genomic_DNA"/>
</dbReference>
<dbReference type="RefSeq" id="XP_018231555.1">
    <property type="nucleotide sequence ID" value="XM_018376051.1"/>
</dbReference>
<dbReference type="RefSeq" id="XP_018231556.1">
    <property type="nucleotide sequence ID" value="XM_018376052.1"/>
</dbReference>
<dbReference type="SMR" id="A0A0J9U3L6"/>
<dbReference type="STRING" id="426428.A0A0J9U3L6"/>
<dbReference type="GeneID" id="28942350"/>
<dbReference type="KEGG" id="fox:FOXG_00016"/>
<dbReference type="VEuPathDB" id="FungiDB:FOXG_00016"/>
<dbReference type="OrthoDB" id="133567at110618"/>
<dbReference type="Proteomes" id="UP000009097">
    <property type="component" value="Unassembled WGS sequence"/>
</dbReference>
<dbReference type="GO" id="GO:0005737">
    <property type="term" value="C:cytoplasm"/>
    <property type="evidence" value="ECO:0007669"/>
    <property type="project" value="UniProtKB-SubCell"/>
</dbReference>
<dbReference type="GO" id="GO:0005634">
    <property type="term" value="C:nucleus"/>
    <property type="evidence" value="ECO:0007669"/>
    <property type="project" value="UniProtKB-SubCell"/>
</dbReference>
<dbReference type="GO" id="GO:0030435">
    <property type="term" value="P:sporulation resulting in formation of a cellular spore"/>
    <property type="evidence" value="ECO:0007669"/>
    <property type="project" value="UniProtKB-KW"/>
</dbReference>
<dbReference type="Gene3D" id="2.60.40.3960">
    <property type="entry name" value="Velvet domain"/>
    <property type="match status" value="2"/>
</dbReference>
<dbReference type="InterPro" id="IPR021740">
    <property type="entry name" value="Velvet"/>
</dbReference>
<dbReference type="InterPro" id="IPR037525">
    <property type="entry name" value="Velvet_dom"/>
</dbReference>
<dbReference type="InterPro" id="IPR038491">
    <property type="entry name" value="Velvet_dom_sf"/>
</dbReference>
<dbReference type="PANTHER" id="PTHR33572">
    <property type="entry name" value="SPORE DEVELOPMENT REGULATOR VOSA"/>
    <property type="match status" value="1"/>
</dbReference>
<dbReference type="PANTHER" id="PTHR33572:SF3">
    <property type="entry name" value="VELVET COMPLEX SUBUNIT B"/>
    <property type="match status" value="1"/>
</dbReference>
<dbReference type="Pfam" id="PF11754">
    <property type="entry name" value="Velvet"/>
    <property type="match status" value="1"/>
</dbReference>
<dbReference type="PROSITE" id="PS51821">
    <property type="entry name" value="VELVET"/>
    <property type="match status" value="1"/>
</dbReference>
<gene>
    <name evidence="6" type="primary">velB</name>
    <name type="ORF">FOXG_00016</name>
</gene>
<feature type="chain" id="PRO_0000435780" description="Velvet complex subunit B">
    <location>
        <begin position="1"/>
        <end position="481"/>
    </location>
</feature>
<feature type="domain" description="Velvet" evidence="2">
    <location>
        <begin position="160"/>
        <end position="464"/>
    </location>
</feature>
<feature type="region of interest" description="Disordered" evidence="3">
    <location>
        <begin position="1"/>
        <end position="157"/>
    </location>
</feature>
<feature type="region of interest" description="Disordered" evidence="3">
    <location>
        <begin position="241"/>
        <end position="339"/>
    </location>
</feature>
<feature type="compositionally biased region" description="Pro residues" evidence="3">
    <location>
        <begin position="36"/>
        <end position="45"/>
    </location>
</feature>
<feature type="compositionally biased region" description="Pro residues" evidence="3">
    <location>
        <begin position="53"/>
        <end position="62"/>
    </location>
</feature>
<feature type="compositionally biased region" description="Pro residues" evidence="3">
    <location>
        <begin position="96"/>
        <end position="112"/>
    </location>
</feature>
<feature type="compositionally biased region" description="Low complexity" evidence="3">
    <location>
        <begin position="241"/>
        <end position="255"/>
    </location>
</feature>
<feature type="compositionally biased region" description="Low complexity" evidence="3">
    <location>
        <begin position="293"/>
        <end position="325"/>
    </location>
</feature>
<name>VELB_FUSO4</name>
<organism>
    <name type="scientific">Fusarium oxysporum f. sp. lycopersici (strain 4287 / CBS 123668 / FGSC 9935 / NRRL 34936)</name>
    <name type="common">Fusarium vascular wilt of tomato</name>
    <dbReference type="NCBI Taxonomy" id="426428"/>
    <lineage>
        <taxon>Eukaryota</taxon>
        <taxon>Fungi</taxon>
        <taxon>Dikarya</taxon>
        <taxon>Ascomycota</taxon>
        <taxon>Pezizomycotina</taxon>
        <taxon>Sordariomycetes</taxon>
        <taxon>Hypocreomycetidae</taxon>
        <taxon>Hypocreales</taxon>
        <taxon>Nectriaceae</taxon>
        <taxon>Fusarium</taxon>
        <taxon>Fusarium oxysporum species complex</taxon>
    </lineage>
</organism>
<comment type="function">
    <text evidence="1 5">Component of the velvet transcription factor complex that controls sexual/asexual developmental ratio in response to light, promoting sexual development in the darkness while stimulating asexual sporulation under illumination (By similarity). The velvet complex acts as a global regulator for secondary metabolite gene expression (By similarity). Component of the velB-VosA heterodimeric complex that plays a dual role in activating genes associated with spore maturation and repressing certain development-associated genes (By similarity). The velB-VosA complex binds DNA through the DNA-binding domain of vosA that recognizes an 11-nucleotide consensus sequence 5'-CTGGCCGCGGC-3' consisting of two motifs in the promoters of key developmental regulatory genes (By similarity). Controls the biosynthetic gene cluster for beauvericin, a depsipeptide mycotoxin that functions as a virulence determinant (PubMed:23106229). Also regulates chromatin structure and transcription of siderophore biosynthetic genes and is required for infection of tomato plants (PubMed:23106229).</text>
</comment>
<comment type="subunit">
    <text evidence="1 5">Component of the heterotrimeric velvet complex composed of laeA, veA and velB; VeA acting as a bridging protein between laeA and velB (PubMed:23106229). Forms a heterodimeric complex with vosA; the formation of the velB-vosA complex is light-dependent (By similarity).</text>
</comment>
<comment type="subcellular location">
    <subcellularLocation>
        <location evidence="1">Nucleus</location>
    </subcellularLocation>
    <subcellularLocation>
        <location evidence="1">Cytoplasm</location>
    </subcellularLocation>
    <text evidence="1">Nuclear localization is mediated by veA (By similarity).</text>
</comment>
<comment type="disruption phenotype">
    <text evidence="4 5">Impairs production of beauvericin and attenuates virulence during infection of tomato plants (PubMed:19161356, PubMed:23106229).</text>
</comment>
<comment type="similarity">
    <text evidence="7">Belongs to the velvet family. VelB subfamily.</text>
</comment>
<evidence type="ECO:0000250" key="1">
    <source>
        <dbReference type="UniProtKB" id="C8VTS4"/>
    </source>
</evidence>
<evidence type="ECO:0000255" key="2">
    <source>
        <dbReference type="PROSITE-ProRule" id="PRU01165"/>
    </source>
</evidence>
<evidence type="ECO:0000256" key="3">
    <source>
        <dbReference type="SAM" id="MobiDB-lite"/>
    </source>
</evidence>
<evidence type="ECO:0000269" key="4">
    <source>
    </source>
</evidence>
<evidence type="ECO:0000269" key="5">
    <source>
    </source>
</evidence>
<evidence type="ECO:0000303" key="6">
    <source>
    </source>
</evidence>
<evidence type="ECO:0000305" key="7"/>
<reference key="1">
    <citation type="journal article" date="2010" name="Nature">
        <title>Comparative genomics reveals mobile pathogenicity chromosomes in Fusarium.</title>
        <authorList>
            <person name="Ma L.-J."/>
            <person name="van der Does H.C."/>
            <person name="Borkovich K.A."/>
            <person name="Coleman J.J."/>
            <person name="Daboussi M.-J."/>
            <person name="Di Pietro A."/>
            <person name="Dufresne M."/>
            <person name="Freitag M."/>
            <person name="Grabherr M."/>
            <person name="Henrissat B."/>
            <person name="Houterman P.M."/>
            <person name="Kang S."/>
            <person name="Shim W.-B."/>
            <person name="Woloshuk C."/>
            <person name="Xie X."/>
            <person name="Xu J.-R."/>
            <person name="Antoniw J."/>
            <person name="Baker S.E."/>
            <person name="Bluhm B.H."/>
            <person name="Breakspear A."/>
            <person name="Brown D.W."/>
            <person name="Butchko R.A.E."/>
            <person name="Chapman S."/>
            <person name="Coulson R."/>
            <person name="Coutinho P.M."/>
            <person name="Danchin E.G.J."/>
            <person name="Diener A."/>
            <person name="Gale L.R."/>
            <person name="Gardiner D.M."/>
            <person name="Goff S."/>
            <person name="Hammond-Kosack K.E."/>
            <person name="Hilburn K."/>
            <person name="Hua-Van A."/>
            <person name="Jonkers W."/>
            <person name="Kazan K."/>
            <person name="Kodira C.D."/>
            <person name="Koehrsen M."/>
            <person name="Kumar L."/>
            <person name="Lee Y.-H."/>
            <person name="Li L."/>
            <person name="Manners J.M."/>
            <person name="Miranda-Saavedra D."/>
            <person name="Mukherjee M."/>
            <person name="Park G."/>
            <person name="Park J."/>
            <person name="Park S.-Y."/>
            <person name="Proctor R.H."/>
            <person name="Regev A."/>
            <person name="Ruiz-Roldan M.C."/>
            <person name="Sain D."/>
            <person name="Sakthikumar S."/>
            <person name="Sykes S."/>
            <person name="Schwartz D.C."/>
            <person name="Turgeon B.G."/>
            <person name="Wapinski I."/>
            <person name="Yoder O."/>
            <person name="Young S."/>
            <person name="Zeng Q."/>
            <person name="Zhou S."/>
            <person name="Galagan J."/>
            <person name="Cuomo C.A."/>
            <person name="Kistler H.C."/>
            <person name="Rep M."/>
        </authorList>
    </citation>
    <scope>NUCLEOTIDE SEQUENCE [LARGE SCALE GENOMIC DNA]</scope>
    <source>
        <strain>4287 / CBS 123668 / FGSC 9935 / NRRL 34936</strain>
    </source>
</reference>
<reference key="2">
    <citation type="submission" date="2015-03" db="UniProtKB">
        <authorList>
            <consortium name="EnsemblFungi"/>
        </authorList>
    </citation>
    <scope>IDENTIFICATION</scope>
    <source>
        <strain>4287 / CBS 123668 / FGSC 9935 / NRRL 34936</strain>
    </source>
</reference>
<reference key="3">
    <citation type="journal article" date="2009" name="Mol. Plant Pathol.">
        <title>Identification of virulence genes in Fusarium oxysporum f. sp. lycopersici by large-scale transposon tagging.</title>
        <authorList>
            <person name="Lopez-Berges M.S."/>
            <person name="di Pietro A."/>
            <person name="Daboussi M.J."/>
            <person name="Wahab H.A."/>
            <person name="Vasnier C."/>
            <person name="Roncero M.I."/>
            <person name="Dufresne M."/>
            <person name="Hera C."/>
        </authorList>
    </citation>
    <scope>DISRUPTION PHENOPTYPE</scope>
</reference>
<reference key="4">
    <citation type="journal article" date="2013" name="Mol. Microbiol.">
        <title>The velvet complex governs mycotoxin production and virulence of Fusarium oxysporum on plant and mammalian hosts.</title>
        <authorList>
            <person name="Lopez-Berges M.S."/>
            <person name="Hera C."/>
            <person name="Sulyok M."/>
            <person name="Schaefer K."/>
            <person name="Capilla J."/>
            <person name="Guarro J."/>
            <person name="Di Pietro A."/>
        </authorList>
    </citation>
    <scope>IDENTIFICATION IN THE VELVET COMPLEX</scope>
    <scope>FUNCTION</scope>
    <scope>DISRUPTION PHENOTYPE</scope>
</reference>
<sequence>MNSAYHSPDMSQRIPGPAYSSSAPPPPIHTYQQHQHPPPPLPPPSQHHHSSHPPLPPPPSAPHPHHQHPPPPPPSHSLSSHQHHSQPPHHQSQLPPYAPAPYQQPQPSQYPRPHPHQQHAPSPSQHDEPPPPPPFSGPSPTDHQKDSEYVPPSYSKIEEGSGWKYSLDVKQQPVRARMCGFGDKDRRPITPPPCVRLVIINTETGKEVDYNSLDHAMFVLSVDLWNHDGTKEVNLVRSSTGTGAMASSSTYTYSSLEPGTPSYQQQSLPPSRESGYGQSQGLNYGQDYPPPVQQSYGQAPSYPPSSSYGPPQQYYPRHSGYSAEPSAPPPGAPFRNGYGQDQNALTRMAVVGGQPQGMFTRNLIGSLAASAFRLEDTEGQSGIWFVLQDLSVRTEGTFRLRFSFVNVGRPGGQGTNVNQGRAPILSSCYSESFHVYSAKKFPGVCESTPLSKKFANQGIKIPIRKDANIKGEGDEEMYDQN</sequence>
<proteinExistence type="evidence at protein level"/>